<sequence length="420" mass="46410">MASNTTVPVITPLAHPEGSKLDFGATVSGVDIENLTDRDFAILRTALFTHQVLVIKSQSHVSPRAQYELTQRFDPLAAPLYGHGNTDSGSVGSKSILHPDLKTIPHQPQVQVIGNGFVPTYEGLSNIQLRHPHHRTFHSTSIPASHDLTHTRFYRWHIDAALYGGVARAPPVVTTLLAVKVPQGRRQTCVYDDGTGDELDVPLGTTAFVSGYKMYDILSETQKAFARSTRVEYAPHPYVWMSSAKSRSTGLGLVSEGKEMPMEELPEIEEDRIQILPMCWRNPVTGKLALQVHPSAVRRLHLEDGTVVEDLKEVREIVYGLQRPGIAPGLVYAHDWEEGDLVIFHNRGTLHSVVGAFAESEVRLFRQCNIAGSEFPMGPEEEEKEEELVHAEQEEGVVEVTKQESLPELRMGAVEVGVAA</sequence>
<proteinExistence type="evidence at protein level"/>
<keyword id="KW-0963">Cytoplasm</keyword>
<keyword id="KW-0223">Dioxygenase</keyword>
<keyword id="KW-0408">Iron</keyword>
<keyword id="KW-0479">Metal-binding</keyword>
<keyword id="KW-0560">Oxidoreductase</keyword>
<keyword id="KW-1185">Reference proteome</keyword>
<gene>
    <name evidence="4" type="primary">xan-1</name>
    <name type="ORF">NCU09738</name>
</gene>
<dbReference type="EC" id="1.14.11.48" evidence="3"/>
<dbReference type="EMBL" id="CM002239">
    <property type="protein sequence ID" value="EAA35204.1"/>
    <property type="molecule type" value="Genomic_DNA"/>
</dbReference>
<dbReference type="RefSeq" id="XP_964440.1">
    <property type="nucleotide sequence ID" value="XM_959347.3"/>
</dbReference>
<dbReference type="SMR" id="Q7SEI7"/>
<dbReference type="STRING" id="367110.Q7SEI7"/>
<dbReference type="PaxDb" id="5141-EFNCRP00000009473"/>
<dbReference type="EnsemblFungi" id="EAA35204">
    <property type="protein sequence ID" value="EAA35204"/>
    <property type="gene ID" value="NCU09738"/>
</dbReference>
<dbReference type="GeneID" id="3880580"/>
<dbReference type="KEGG" id="ncr:NCU09738"/>
<dbReference type="VEuPathDB" id="FungiDB:NCU09738"/>
<dbReference type="HOGENOM" id="CLU_046574_1_0_1"/>
<dbReference type="InParanoid" id="Q7SEI7"/>
<dbReference type="OMA" id="VFPMTWK"/>
<dbReference type="OrthoDB" id="93019at2759"/>
<dbReference type="Proteomes" id="UP000001805">
    <property type="component" value="Chromosome 4, Linkage Group IV"/>
</dbReference>
<dbReference type="GO" id="GO:0005829">
    <property type="term" value="C:cytosol"/>
    <property type="evidence" value="ECO:0007669"/>
    <property type="project" value="UniProtKB-SubCell"/>
</dbReference>
<dbReference type="GO" id="GO:0097641">
    <property type="term" value="F:alpha-ketoglutarate-dependent xanthine dioxygenase activity"/>
    <property type="evidence" value="ECO:0007669"/>
    <property type="project" value="RHEA"/>
</dbReference>
<dbReference type="GO" id="GO:0046872">
    <property type="term" value="F:metal ion binding"/>
    <property type="evidence" value="ECO:0007669"/>
    <property type="project" value="UniProtKB-KW"/>
</dbReference>
<dbReference type="Gene3D" id="3.60.130.10">
    <property type="entry name" value="Clavaminate synthase-like"/>
    <property type="match status" value="1"/>
</dbReference>
<dbReference type="InterPro" id="IPR042098">
    <property type="entry name" value="TauD-like_sf"/>
</dbReference>
<dbReference type="InterPro" id="IPR003819">
    <property type="entry name" value="TauD/TfdA-like"/>
</dbReference>
<dbReference type="InterPro" id="IPR051178">
    <property type="entry name" value="TfdA_dioxygenase"/>
</dbReference>
<dbReference type="PANTHER" id="PTHR43779:SF2">
    <property type="entry name" value="ALPHA-KETOGLUTARATE-DEPENDENT XANTHINE DIOXYGENASE XAN1"/>
    <property type="match status" value="1"/>
</dbReference>
<dbReference type="PANTHER" id="PTHR43779">
    <property type="entry name" value="DIOXYGENASE RV0097-RELATED"/>
    <property type="match status" value="1"/>
</dbReference>
<dbReference type="Pfam" id="PF02668">
    <property type="entry name" value="TauD"/>
    <property type="match status" value="1"/>
</dbReference>
<dbReference type="SUPFAM" id="SSF51197">
    <property type="entry name" value="Clavaminate synthase-like"/>
    <property type="match status" value="1"/>
</dbReference>
<protein>
    <recommendedName>
        <fullName evidence="4">Alpha-ketoglutarate-dependent xanthine dioxygenase xan-1</fullName>
        <ecNumber evidence="3">1.14.11.48</ecNumber>
    </recommendedName>
</protein>
<name>XANA_NEUCR</name>
<evidence type="ECO:0000250" key="1">
    <source>
        <dbReference type="UniProtKB" id="C8VSZ2"/>
    </source>
</evidence>
<evidence type="ECO:0000250" key="2">
    <source>
        <dbReference type="UniProtKB" id="P37610"/>
    </source>
</evidence>
<evidence type="ECO:0000269" key="3">
    <source>
    </source>
</evidence>
<evidence type="ECO:0000303" key="4">
    <source>
    </source>
</evidence>
<evidence type="ECO:0000305" key="5"/>
<reference key="1">
    <citation type="journal article" date="2003" name="Nature">
        <title>The genome sequence of the filamentous fungus Neurospora crassa.</title>
        <authorList>
            <person name="Galagan J.E."/>
            <person name="Calvo S.E."/>
            <person name="Borkovich K.A."/>
            <person name="Selker E.U."/>
            <person name="Read N.D."/>
            <person name="Jaffe D.B."/>
            <person name="FitzHugh W."/>
            <person name="Ma L.-J."/>
            <person name="Smirnov S."/>
            <person name="Purcell S."/>
            <person name="Rehman B."/>
            <person name="Elkins T."/>
            <person name="Engels R."/>
            <person name="Wang S."/>
            <person name="Nielsen C.B."/>
            <person name="Butler J."/>
            <person name="Endrizzi M."/>
            <person name="Qui D."/>
            <person name="Ianakiev P."/>
            <person name="Bell-Pedersen D."/>
            <person name="Nelson M.A."/>
            <person name="Werner-Washburne M."/>
            <person name="Selitrennikoff C.P."/>
            <person name="Kinsey J.A."/>
            <person name="Braun E.L."/>
            <person name="Zelter A."/>
            <person name="Schulte U."/>
            <person name="Kothe G.O."/>
            <person name="Jedd G."/>
            <person name="Mewes H.-W."/>
            <person name="Staben C."/>
            <person name="Marcotte E."/>
            <person name="Greenberg D."/>
            <person name="Roy A."/>
            <person name="Foley K."/>
            <person name="Naylor J."/>
            <person name="Stange-Thomann N."/>
            <person name="Barrett R."/>
            <person name="Gnerre S."/>
            <person name="Kamal M."/>
            <person name="Kamvysselis M."/>
            <person name="Mauceli E.W."/>
            <person name="Bielke C."/>
            <person name="Rudd S."/>
            <person name="Frishman D."/>
            <person name="Krystofova S."/>
            <person name="Rasmussen C."/>
            <person name="Metzenberg R.L."/>
            <person name="Perkins D.D."/>
            <person name="Kroken S."/>
            <person name="Cogoni C."/>
            <person name="Macino G."/>
            <person name="Catcheside D.E.A."/>
            <person name="Li W."/>
            <person name="Pratt R.J."/>
            <person name="Osmani S.A."/>
            <person name="DeSouza C.P.C."/>
            <person name="Glass N.L."/>
            <person name="Orbach M.J."/>
            <person name="Berglund J.A."/>
            <person name="Voelker R."/>
            <person name="Yarden O."/>
            <person name="Plamann M."/>
            <person name="Seiler S."/>
            <person name="Dunlap J.C."/>
            <person name="Radford A."/>
            <person name="Aramayo R."/>
            <person name="Natvig D.O."/>
            <person name="Alex L.A."/>
            <person name="Mannhaupt G."/>
            <person name="Ebbole D.J."/>
            <person name="Freitag M."/>
            <person name="Paulsen I."/>
            <person name="Sachs M.S."/>
            <person name="Lander E.S."/>
            <person name="Nusbaum C."/>
            <person name="Birren B.W."/>
        </authorList>
    </citation>
    <scope>NUCLEOTIDE SEQUENCE [LARGE SCALE GENOMIC DNA]</scope>
    <source>
        <strain>ATCC 24698 / 74-OR23-1A / CBS 708.71 / DSM 1257 / FGSC 987</strain>
    </source>
</reference>
<reference key="2">
    <citation type="journal article" date="2005" name="Mol. Microbiol.">
        <title>Convergent evolution of hydroxylation mechanisms in the fungal kingdom: molybdenum cofactor-independent hydroxylation of xanthine via alpha-ketoglutarate-dependent dioxygenases.</title>
        <authorList>
            <person name="Cultrone A."/>
            <person name="Scazzocchio C."/>
            <person name="Rochet M."/>
            <person name="Montero-Moran G."/>
            <person name="Drevet C."/>
            <person name="Fernandez-Martin R."/>
        </authorList>
    </citation>
    <scope>FUNCTION</scope>
    <scope>CATALYTIC ACTIVITY</scope>
</reference>
<comment type="function">
    <text evidence="3">Alpha-ketoglutarate-dependent xanthine dioxygenase is a non-heme mononuclear Fe(2+) enzyme that decarboxylates alpha-ketoglutarate to succinate and CO(2) while hydroxylating xanthine to generate uric acid (PubMed:15948966). Allows xanthine utilization as a nitrogen source (PubMed:15948966).</text>
</comment>
<comment type="catalytic activity">
    <reaction evidence="3">
        <text>xanthine + 2-oxoglutarate + O2 = urate + succinate + CO2</text>
        <dbReference type="Rhea" id="RHEA:43120"/>
        <dbReference type="ChEBI" id="CHEBI:15379"/>
        <dbReference type="ChEBI" id="CHEBI:16526"/>
        <dbReference type="ChEBI" id="CHEBI:16810"/>
        <dbReference type="ChEBI" id="CHEBI:17712"/>
        <dbReference type="ChEBI" id="CHEBI:17775"/>
        <dbReference type="ChEBI" id="CHEBI:30031"/>
        <dbReference type="EC" id="1.14.11.48"/>
    </reaction>
    <physiologicalReaction direction="left-to-right" evidence="3">
        <dbReference type="Rhea" id="RHEA:43121"/>
    </physiologicalReaction>
</comment>
<comment type="cofactor">
    <cofactor evidence="2">
        <name>Fe(2+)</name>
        <dbReference type="ChEBI" id="CHEBI:29033"/>
    </cofactor>
    <text evidence="2">Binds 1 Fe(2+) ion per subunit.</text>
</comment>
<comment type="subcellular location">
    <subcellularLocation>
        <location evidence="1">Cytoplasm</location>
        <location evidence="1">Cytosol</location>
    </subcellularLocation>
</comment>
<comment type="similarity">
    <text evidence="5">Belongs to the TfdA dioxygenase family.</text>
</comment>
<accession>Q7SEI7</accession>
<feature type="chain" id="PRO_0000446006" description="Alpha-ketoglutarate-dependent xanthine dioxygenase xan-1">
    <location>
        <begin position="1"/>
        <end position="420"/>
    </location>
</feature>
<feature type="binding site" evidence="2">
    <location>
        <position position="157"/>
    </location>
    <ligand>
        <name>Fe cation</name>
        <dbReference type="ChEBI" id="CHEBI:24875"/>
        <note>catalytic</note>
    </ligand>
</feature>
<feature type="binding site" evidence="2">
    <location>
        <position position="159"/>
    </location>
    <ligand>
        <name>Fe cation</name>
        <dbReference type="ChEBI" id="CHEBI:24875"/>
        <note>catalytic</note>
    </ligand>
</feature>
<feature type="binding site" evidence="2">
    <location>
        <position position="206"/>
    </location>
    <ligand>
        <name>2-oxoglutarate</name>
        <dbReference type="ChEBI" id="CHEBI:16810"/>
    </ligand>
</feature>
<feature type="binding site" evidence="2">
    <location>
        <position position="336"/>
    </location>
    <ligand>
        <name>2-oxoglutarate</name>
        <dbReference type="ChEBI" id="CHEBI:16810"/>
    </ligand>
</feature>
<feature type="binding site" evidence="2">
    <location>
        <position position="351"/>
    </location>
    <ligand>
        <name>Fe cation</name>
        <dbReference type="ChEBI" id="CHEBI:24875"/>
        <note>catalytic</note>
    </ligand>
</feature>
<feature type="binding site" evidence="2">
    <location>
        <position position="366"/>
    </location>
    <ligand>
        <name>2-oxoglutarate</name>
        <dbReference type="ChEBI" id="CHEBI:16810"/>
    </ligand>
</feature>
<feature type="binding site" evidence="2">
    <location>
        <position position="366"/>
    </location>
    <ligand>
        <name>substrate</name>
    </ligand>
</feature>
<organism>
    <name type="scientific">Neurospora crassa (strain ATCC 24698 / 74-OR23-1A / CBS 708.71 / DSM 1257 / FGSC 987)</name>
    <dbReference type="NCBI Taxonomy" id="367110"/>
    <lineage>
        <taxon>Eukaryota</taxon>
        <taxon>Fungi</taxon>
        <taxon>Dikarya</taxon>
        <taxon>Ascomycota</taxon>
        <taxon>Pezizomycotina</taxon>
        <taxon>Sordariomycetes</taxon>
        <taxon>Sordariomycetidae</taxon>
        <taxon>Sordariales</taxon>
        <taxon>Sordariaceae</taxon>
        <taxon>Neurospora</taxon>
    </lineage>
</organism>